<feature type="chain" id="PRO_0000061426" description="Cytochrome b">
    <location>
        <begin position="1" status="less than"/>
        <end position="308" status="greater than"/>
    </location>
</feature>
<feature type="transmembrane region" description="Helical" evidence="2">
    <location>
        <begin position="1"/>
        <end position="21"/>
    </location>
</feature>
<feature type="transmembrane region" description="Helical" evidence="2">
    <location>
        <begin position="45"/>
        <end position="66"/>
    </location>
</feature>
<feature type="transmembrane region" description="Helical" evidence="2">
    <location>
        <begin position="81"/>
        <end position="101"/>
    </location>
</feature>
<feature type="transmembrane region" description="Helical" evidence="2">
    <location>
        <begin position="146"/>
        <end position="166"/>
    </location>
</feature>
<feature type="transmembrane region" description="Helical" evidence="2">
    <location>
        <begin position="194"/>
        <end position="214"/>
    </location>
</feature>
<feature type="transmembrane region" description="Helical" evidence="2">
    <location>
        <begin position="256"/>
        <end position="276"/>
    </location>
</feature>
<feature type="transmembrane region" description="Helical" evidence="2">
    <location>
        <begin position="288"/>
        <end position="308"/>
    </location>
</feature>
<feature type="binding site" description="axial binding residue" evidence="2">
    <location>
        <position position="51"/>
    </location>
    <ligand>
        <name>heme b</name>
        <dbReference type="ChEBI" id="CHEBI:60344"/>
        <label>b562</label>
    </ligand>
    <ligandPart>
        <name>Fe</name>
        <dbReference type="ChEBI" id="CHEBI:18248"/>
    </ligandPart>
</feature>
<feature type="binding site" description="axial binding residue" evidence="2">
    <location>
        <position position="65"/>
    </location>
    <ligand>
        <name>heme b</name>
        <dbReference type="ChEBI" id="CHEBI:60344"/>
        <label>b566</label>
    </ligand>
    <ligandPart>
        <name>Fe</name>
        <dbReference type="ChEBI" id="CHEBI:18248"/>
    </ligandPart>
</feature>
<feature type="binding site" description="axial binding residue" evidence="2">
    <location>
        <position position="150"/>
    </location>
    <ligand>
        <name>heme b</name>
        <dbReference type="ChEBI" id="CHEBI:60344"/>
        <label>b562</label>
    </ligand>
    <ligandPart>
        <name>Fe</name>
        <dbReference type="ChEBI" id="CHEBI:18248"/>
    </ligandPart>
</feature>
<feature type="binding site" description="axial binding residue" evidence="2">
    <location>
        <position position="164"/>
    </location>
    <ligand>
        <name>heme b</name>
        <dbReference type="ChEBI" id="CHEBI:60344"/>
        <label>b566</label>
    </ligand>
    <ligandPart>
        <name>Fe</name>
        <dbReference type="ChEBI" id="CHEBI:18248"/>
    </ligandPart>
</feature>
<feature type="binding site" evidence="2">
    <location>
        <position position="169"/>
    </location>
    <ligand>
        <name>a ubiquinone</name>
        <dbReference type="ChEBI" id="CHEBI:16389"/>
    </ligand>
</feature>
<feature type="sequence conflict" description="In Ref. 3; CAA38685/CAA38659/CAA38660." evidence="5" ref="3">
    <original>M</original>
    <variation>I</variation>
    <location>
        <position position="7"/>
    </location>
</feature>
<feature type="sequence conflict" description="In Ref. 4; AAA32140." evidence="5" ref="4">
    <original>G</original>
    <variation>A</variation>
    <location>
        <position position="16"/>
    </location>
</feature>
<feature type="sequence conflict" description="In Ref. 4; AAA32140." evidence="5" ref="4">
    <original>A</original>
    <variation>T</variation>
    <location>
        <position position="90"/>
    </location>
</feature>
<feature type="non-terminal residue">
    <location>
        <position position="1"/>
    </location>
</feature>
<feature type="non-terminal residue">
    <location>
        <position position="308"/>
    </location>
</feature>
<accession>P16363</accession>
<accession>Q37059</accession>
<evidence type="ECO:0000250" key="1"/>
<evidence type="ECO:0000250" key="2">
    <source>
        <dbReference type="UniProtKB" id="P00157"/>
    </source>
</evidence>
<evidence type="ECO:0000255" key="3">
    <source>
        <dbReference type="PROSITE-ProRule" id="PRU00967"/>
    </source>
</evidence>
<evidence type="ECO:0000255" key="4">
    <source>
        <dbReference type="PROSITE-ProRule" id="PRU00968"/>
    </source>
</evidence>
<evidence type="ECO:0000305" key="5"/>
<comment type="function">
    <text evidence="2">Component of the ubiquinol-cytochrome c reductase complex (complex III or cytochrome b-c1 complex) that is part of the mitochondrial respiratory chain. The b-c1 complex mediates electron transfer from ubiquinol to cytochrome c. Contributes to the generation of a proton gradient across the mitochondrial membrane that is then used for ATP synthesis.</text>
</comment>
<comment type="cofactor">
    <cofactor evidence="2">
        <name>heme b</name>
        <dbReference type="ChEBI" id="CHEBI:60344"/>
    </cofactor>
    <text evidence="2">Binds 2 heme b groups non-covalently.</text>
</comment>
<comment type="subunit">
    <text evidence="2">The cytochrome bc1 complex contains 11 subunits: 3 respiratory subunits (MT-CYB, CYC1 and UQCRFS1), 2 core proteins (UQCRC1 and UQCRC2) and 6 low-molecular weight proteins (UQCRH/QCR6, UQCRB/QCR7, UQCRQ/QCR8, UQCR10/QCR9, UQCR11/QCR10 and a cleavage product of UQCRFS1). This cytochrome bc1 complex then forms a dimer.</text>
</comment>
<comment type="subcellular location">
    <subcellularLocation>
        <location evidence="2">Mitochondrion inner membrane</location>
        <topology evidence="2">Multi-pass membrane protein</topology>
    </subcellularLocation>
</comment>
<comment type="miscellaneous">
    <text evidence="1">Heme 1 (or BL or b562) is low-potential and absorbs at about 562 nm, and heme 2 (or BH or b566) is high-potential and absorbs at about 566 nm.</text>
</comment>
<comment type="similarity">
    <text evidence="3 4">Belongs to the cytochrome b family.</text>
</comment>
<comment type="caution">
    <text evidence="2">The full-length protein contains only eight transmembrane helices, not nine as predicted by bioinformatics tools.</text>
</comment>
<organism>
    <name type="scientific">Garritornis isidorei</name>
    <name type="common">Papuan babbler</name>
    <name type="synonym">Pomatostomus isidorei</name>
    <dbReference type="NCBI Taxonomy" id="9175"/>
    <lineage>
        <taxon>Eukaryota</taxon>
        <taxon>Metazoa</taxon>
        <taxon>Chordata</taxon>
        <taxon>Craniata</taxon>
        <taxon>Vertebrata</taxon>
        <taxon>Euteleostomi</taxon>
        <taxon>Archelosauria</taxon>
        <taxon>Archosauria</taxon>
        <taxon>Dinosauria</taxon>
        <taxon>Saurischia</taxon>
        <taxon>Theropoda</taxon>
        <taxon>Coelurosauria</taxon>
        <taxon>Aves</taxon>
        <taxon>Neognathae</taxon>
        <taxon>Neoaves</taxon>
        <taxon>Telluraves</taxon>
        <taxon>Australaves</taxon>
        <taxon>Passeriformes</taxon>
        <taxon>Pomatostomidae</taxon>
        <taxon>Garritornis</taxon>
    </lineage>
</organism>
<gene>
    <name type="primary">MT-CYB</name>
    <name type="synonym">COB</name>
    <name type="synonym">CYTB</name>
    <name type="synonym">MTCYB</name>
</gene>
<keyword id="KW-0249">Electron transport</keyword>
<keyword id="KW-0349">Heme</keyword>
<keyword id="KW-0408">Iron</keyword>
<keyword id="KW-0472">Membrane</keyword>
<keyword id="KW-0479">Metal-binding</keyword>
<keyword id="KW-0496">Mitochondrion</keyword>
<keyword id="KW-0999">Mitochondrion inner membrane</keyword>
<keyword id="KW-0679">Respiratory chain</keyword>
<keyword id="KW-0812">Transmembrane</keyword>
<keyword id="KW-1133">Transmembrane helix</keyword>
<keyword id="KW-0813">Transport</keyword>
<keyword id="KW-0830">Ubiquinone</keyword>
<geneLocation type="mitochondrion"/>
<name>CYB_GARIS</name>
<proteinExistence type="inferred from homology"/>
<protein>
    <recommendedName>
        <fullName>Cytochrome b</fullName>
    </recommendedName>
    <alternativeName>
        <fullName>Complex III subunit 3</fullName>
    </alternativeName>
    <alternativeName>
        <fullName>Complex III subunit III</fullName>
    </alternativeName>
    <alternativeName>
        <fullName>Cytochrome b-c1 complex subunit 3</fullName>
    </alternativeName>
    <alternativeName>
        <fullName>Ubiquinol-cytochrome-c reductase complex cytochrome b subunit</fullName>
    </alternativeName>
</protein>
<reference key="1">
    <citation type="journal article" date="1991" name="Proc. R. Soc. B">
        <title>Mitochondrial resolution of a deep branch in the genealogical tree for perching birds.</title>
        <authorList>
            <person name="Edwards S.V."/>
            <person name="Arctander P."/>
            <person name="Wilson A.C."/>
        </authorList>
    </citation>
    <scope>NUCLEOTIDE SEQUENCE [GENOMIC DNA]</scope>
</reference>
<reference key="2">
    <citation type="journal article" date="1996" name="Proc. R. Soc. B">
        <authorList>
            <person name="Edwards S.V."/>
            <person name="Arctander P."/>
        </authorList>
    </citation>
    <scope>ERRATUM OF PUBMED:1676522</scope>
</reference>
<reference key="3">
    <citation type="journal article" date="1990" name="Genetics">
        <title>Phylogenetically informative length polymorphism and sequence variability in mitochondrial DNA of Australian songbirds (Pomatostomus).</title>
        <authorList>
            <person name="Edwards S.V."/>
            <person name="Wilson A.C."/>
        </authorList>
    </citation>
    <scope>NUCLEOTIDE SEQUENCE [GENOMIC DNA] OF 5-98</scope>
    <source>
        <tissue>Liver</tissue>
    </source>
</reference>
<reference key="4">
    <citation type="journal article" date="1989" name="Proc. Natl. Acad. Sci. U.S.A.">
        <title>Dynamics of mitochondrial DNA evolution in animals: amplification and sequencing with conserved primers.</title>
        <authorList>
            <person name="Kocher T.D."/>
            <person name="Thomas W.K."/>
            <person name="Meyer A."/>
            <person name="Edwards S.V."/>
            <person name="Paeaebo S."/>
            <person name="Villablanca F.X."/>
            <person name="Wilson A.C."/>
        </authorList>
    </citation>
    <scope>NUCLEOTIDE SEQUENCE [GENOMIC DNA] OF 15-93</scope>
</reference>
<dbReference type="EMBL" id="X60938">
    <property type="protein sequence ID" value="CAA43273.1"/>
    <property type="molecule type" value="Genomic_DNA"/>
</dbReference>
<dbReference type="EMBL" id="X54913">
    <property type="protein sequence ID" value="CAA38685.1"/>
    <property type="molecule type" value="Genomic_DNA"/>
</dbReference>
<dbReference type="EMBL" id="X54886">
    <property type="protein sequence ID" value="CAA38659.1"/>
    <property type="molecule type" value="Genomic_DNA"/>
</dbReference>
<dbReference type="EMBL" id="X54887">
    <property type="protein sequence ID" value="CAA38660.1"/>
    <property type="molecule type" value="Genomic_DNA"/>
</dbReference>
<dbReference type="EMBL" id="M25689">
    <property type="protein sequence ID" value="AAA32140.1"/>
    <property type="molecule type" value="Genomic_DNA"/>
</dbReference>
<dbReference type="PIR" id="S22928">
    <property type="entry name" value="S22928"/>
</dbReference>
<dbReference type="SMR" id="P16363"/>
<dbReference type="GO" id="GO:0005743">
    <property type="term" value="C:mitochondrial inner membrane"/>
    <property type="evidence" value="ECO:0007669"/>
    <property type="project" value="UniProtKB-SubCell"/>
</dbReference>
<dbReference type="GO" id="GO:0046872">
    <property type="term" value="F:metal ion binding"/>
    <property type="evidence" value="ECO:0007669"/>
    <property type="project" value="UniProtKB-KW"/>
</dbReference>
<dbReference type="GO" id="GO:0008121">
    <property type="term" value="F:ubiquinol-cytochrome-c reductase activity"/>
    <property type="evidence" value="ECO:0007669"/>
    <property type="project" value="TreeGrafter"/>
</dbReference>
<dbReference type="GO" id="GO:0006122">
    <property type="term" value="P:mitochondrial electron transport, ubiquinol to cytochrome c"/>
    <property type="evidence" value="ECO:0007669"/>
    <property type="project" value="TreeGrafter"/>
</dbReference>
<dbReference type="CDD" id="cd00290">
    <property type="entry name" value="cytochrome_b_C"/>
    <property type="match status" value="1"/>
</dbReference>
<dbReference type="CDD" id="cd00284">
    <property type="entry name" value="Cytochrome_b_N"/>
    <property type="match status" value="1"/>
</dbReference>
<dbReference type="Gene3D" id="1.20.810.10">
    <property type="entry name" value="Cytochrome Bc1 Complex, Chain C"/>
    <property type="match status" value="1"/>
</dbReference>
<dbReference type="InterPro" id="IPR005798">
    <property type="entry name" value="Cyt_b/b6_C"/>
</dbReference>
<dbReference type="InterPro" id="IPR036150">
    <property type="entry name" value="Cyt_b/b6_C_sf"/>
</dbReference>
<dbReference type="InterPro" id="IPR005797">
    <property type="entry name" value="Cyt_b/b6_N"/>
</dbReference>
<dbReference type="InterPro" id="IPR027387">
    <property type="entry name" value="Cytb/b6-like_sf"/>
</dbReference>
<dbReference type="InterPro" id="IPR048260">
    <property type="entry name" value="Cytochrome_b_C_euk/bac"/>
</dbReference>
<dbReference type="InterPro" id="IPR048259">
    <property type="entry name" value="Cytochrome_b_N_euk/bac"/>
</dbReference>
<dbReference type="InterPro" id="IPR016174">
    <property type="entry name" value="Di-haem_cyt_TM"/>
</dbReference>
<dbReference type="PANTHER" id="PTHR19271">
    <property type="entry name" value="CYTOCHROME B"/>
    <property type="match status" value="1"/>
</dbReference>
<dbReference type="PANTHER" id="PTHR19271:SF16">
    <property type="entry name" value="CYTOCHROME B"/>
    <property type="match status" value="1"/>
</dbReference>
<dbReference type="Pfam" id="PF00032">
    <property type="entry name" value="Cytochrom_B_C"/>
    <property type="match status" value="1"/>
</dbReference>
<dbReference type="Pfam" id="PF00033">
    <property type="entry name" value="Cytochrome_B"/>
    <property type="match status" value="1"/>
</dbReference>
<dbReference type="SUPFAM" id="SSF81648">
    <property type="entry name" value="a domain/subunit of cytochrome bc1 complex (Ubiquinol-cytochrome c reductase)"/>
    <property type="match status" value="1"/>
</dbReference>
<dbReference type="SUPFAM" id="SSF81342">
    <property type="entry name" value="Transmembrane di-heme cytochromes"/>
    <property type="match status" value="1"/>
</dbReference>
<dbReference type="PROSITE" id="PS51003">
    <property type="entry name" value="CYTB_CTER"/>
    <property type="match status" value="1"/>
</dbReference>
<dbReference type="PROSITE" id="PS51002">
    <property type="entry name" value="CYTB_NTER"/>
    <property type="match status" value="1"/>
</dbReference>
<sequence length="308" mass="34013">SGSLLGMCLIVRIITGLFLAAHYTADTSLAFNSVAHTCRNVQFGWLIRNLHANGASLFFICIYLHIGRGLYYGSYLNKETWNIGVILLLALMATAFVGYVLPWGQMSFWGATVITNLFSAIPYIGQTLVEWAWGGFSVDNPTLTRFFALHFLLPFVIAGLTLVHLTFLHETGSNNPLGIPSDCDKIPFHPYYSTKDVLGFALLLTPLIALALFSPNLLGDPENFTPANPLATPPHIKPEWYFLFAYAILRSIPNKLGGVLALAASVLVLFLIPLLHNSKLRSMTFRPLSQILFWALVANLLVLTWVGS</sequence>